<gene>
    <name type="primary">lctB</name>
</gene>
<accession>P06550</accession>
<organism>
    <name type="scientific">Geobacillus stearothermophilus</name>
    <name type="common">Bacillus stearothermophilus</name>
    <dbReference type="NCBI Taxonomy" id="1422"/>
    <lineage>
        <taxon>Bacteria</taxon>
        <taxon>Bacillati</taxon>
        <taxon>Bacillota</taxon>
        <taxon>Bacilli</taxon>
        <taxon>Bacillales</taxon>
        <taxon>Anoxybacillaceae</taxon>
        <taxon>Geobacillus</taxon>
    </lineage>
</organism>
<proteinExistence type="predicted"/>
<reference key="1">
    <citation type="journal article" date="1987" name="Nucleic Acids Res.">
        <title>Sequence of the Bacillus caldotenax and Bacillus stearothermophilus lctB genes.</title>
        <authorList>
            <person name="Barstow D.A."/>
            <person name="Murphy J."/>
            <person name="Sharman A."/>
            <person name="Atkinson T."/>
            <person name="Minton N."/>
        </authorList>
    </citation>
    <scope>NUCLEOTIDE SEQUENCE [GENOMIC DNA]</scope>
</reference>
<feature type="chain" id="PRO_0000084383" description="Protein LctB">
    <location>
        <begin position="1"/>
        <end position="134"/>
    </location>
</feature>
<sequence length="134" mass="14572">MDYAFLGVVTAVLLGSITSLWTASVQATHRLSLDSLWVLVQWYGTMLLGFAMIYMILQANGHHVFTPSPSSAAGNRLSMLEDSLYLSGMTLLSVGYGDVTPVGIGRWIAIAEALLGYIMPAVIVTRTVFDSDRR</sequence>
<name>LCTB_GEOSE</name>
<dbReference type="EMBL" id="X05067">
    <property type="protein sequence ID" value="CAA28733.1"/>
    <property type="molecule type" value="Genomic_DNA"/>
</dbReference>
<dbReference type="PIR" id="B25748">
    <property type="entry name" value="B25748"/>
</dbReference>
<dbReference type="RefSeq" id="WP_033016717.1">
    <property type="nucleotide sequence ID" value="NZ_RCTK01000052.1"/>
</dbReference>
<dbReference type="SMR" id="P06550"/>
<dbReference type="TCDB" id="1.A.1.29.1">
    <property type="family name" value="the voltage-gated ion channel (vic) superfamily"/>
</dbReference>
<dbReference type="OrthoDB" id="9813518at2"/>
<dbReference type="Gene3D" id="1.10.287.70">
    <property type="match status" value="1"/>
</dbReference>
<dbReference type="InterPro" id="IPR013099">
    <property type="entry name" value="K_chnl_dom"/>
</dbReference>
<dbReference type="Pfam" id="PF07885">
    <property type="entry name" value="Ion_trans_2"/>
    <property type="match status" value="1"/>
</dbReference>
<dbReference type="SUPFAM" id="SSF81324">
    <property type="entry name" value="Voltage-gated potassium channels"/>
    <property type="match status" value="1"/>
</dbReference>
<protein>
    <recommendedName>
        <fullName>Protein LctB</fullName>
    </recommendedName>
</protein>